<protein>
    <recommendedName>
        <fullName>Uncharacterized protein YtzL</fullName>
    </recommendedName>
</protein>
<dbReference type="EMBL" id="AL009126">
    <property type="protein sequence ID" value="CAX52681.1"/>
    <property type="molecule type" value="Genomic_DNA"/>
</dbReference>
<dbReference type="RefSeq" id="WP_003229069.1">
    <property type="nucleotide sequence ID" value="NZ_OZ025638.1"/>
</dbReference>
<dbReference type="RefSeq" id="YP_003097775.1">
    <property type="nucleotide sequence ID" value="NC_000964.3"/>
</dbReference>
<dbReference type="FunCoup" id="C0H3Q2">
    <property type="interactions" value="37"/>
</dbReference>
<dbReference type="STRING" id="224308.BSU30739"/>
<dbReference type="PaxDb" id="224308-BSU30739"/>
<dbReference type="EnsemblBacteria" id="CAX52681">
    <property type="protein sequence ID" value="CAX52681"/>
    <property type="gene ID" value="BSU_30739"/>
</dbReference>
<dbReference type="GeneID" id="8303158"/>
<dbReference type="KEGG" id="bsu:BSU30739"/>
<dbReference type="PATRIC" id="fig|224308.179.peg.3331"/>
<dbReference type="eggNOG" id="ENOG5032YFR">
    <property type="taxonomic scope" value="Bacteria"/>
</dbReference>
<dbReference type="InParanoid" id="C0H3Q2"/>
<dbReference type="OrthoDB" id="1681234at2"/>
<dbReference type="BioCyc" id="BSUB:BSU30739-MONOMER"/>
<dbReference type="Proteomes" id="UP000001570">
    <property type="component" value="Chromosome"/>
</dbReference>
<dbReference type="InterPro" id="IPR011437">
    <property type="entry name" value="DUF1540"/>
</dbReference>
<dbReference type="Pfam" id="PF07561">
    <property type="entry name" value="DUF1540"/>
    <property type="match status" value="1"/>
</dbReference>
<organism>
    <name type="scientific">Bacillus subtilis (strain 168)</name>
    <dbReference type="NCBI Taxonomy" id="224308"/>
    <lineage>
        <taxon>Bacteria</taxon>
        <taxon>Bacillati</taxon>
        <taxon>Bacillota</taxon>
        <taxon>Bacilli</taxon>
        <taxon>Bacillales</taxon>
        <taxon>Bacillaceae</taxon>
        <taxon>Bacillus</taxon>
    </lineage>
</organism>
<sequence length="52" mass="5867">MEQKILCEVNNCSYWGKGNKCTADAIYVVSHTGETAENSRETDCKTFKPHDL</sequence>
<proteinExistence type="predicted"/>
<keyword id="KW-1185">Reference proteome</keyword>
<feature type="chain" id="PRO_0000389490" description="Uncharacterized protein YtzL">
    <location>
        <begin position="1"/>
        <end position="52"/>
    </location>
</feature>
<reference key="1">
    <citation type="journal article" date="1997" name="Nature">
        <title>The complete genome sequence of the Gram-positive bacterium Bacillus subtilis.</title>
        <authorList>
            <person name="Kunst F."/>
            <person name="Ogasawara N."/>
            <person name="Moszer I."/>
            <person name="Albertini A.M."/>
            <person name="Alloni G."/>
            <person name="Azevedo V."/>
            <person name="Bertero M.G."/>
            <person name="Bessieres P."/>
            <person name="Bolotin A."/>
            <person name="Borchert S."/>
            <person name="Borriss R."/>
            <person name="Boursier L."/>
            <person name="Brans A."/>
            <person name="Braun M."/>
            <person name="Brignell S.C."/>
            <person name="Bron S."/>
            <person name="Brouillet S."/>
            <person name="Bruschi C.V."/>
            <person name="Caldwell B."/>
            <person name="Capuano V."/>
            <person name="Carter N.M."/>
            <person name="Choi S.-K."/>
            <person name="Codani J.-J."/>
            <person name="Connerton I.F."/>
            <person name="Cummings N.J."/>
            <person name="Daniel R.A."/>
            <person name="Denizot F."/>
            <person name="Devine K.M."/>
            <person name="Duesterhoeft A."/>
            <person name="Ehrlich S.D."/>
            <person name="Emmerson P.T."/>
            <person name="Entian K.-D."/>
            <person name="Errington J."/>
            <person name="Fabret C."/>
            <person name="Ferrari E."/>
            <person name="Foulger D."/>
            <person name="Fritz C."/>
            <person name="Fujita M."/>
            <person name="Fujita Y."/>
            <person name="Fuma S."/>
            <person name="Galizzi A."/>
            <person name="Galleron N."/>
            <person name="Ghim S.-Y."/>
            <person name="Glaser P."/>
            <person name="Goffeau A."/>
            <person name="Golightly E.J."/>
            <person name="Grandi G."/>
            <person name="Guiseppi G."/>
            <person name="Guy B.J."/>
            <person name="Haga K."/>
            <person name="Haiech J."/>
            <person name="Harwood C.R."/>
            <person name="Henaut A."/>
            <person name="Hilbert H."/>
            <person name="Holsappel S."/>
            <person name="Hosono S."/>
            <person name="Hullo M.-F."/>
            <person name="Itaya M."/>
            <person name="Jones L.-M."/>
            <person name="Joris B."/>
            <person name="Karamata D."/>
            <person name="Kasahara Y."/>
            <person name="Klaerr-Blanchard M."/>
            <person name="Klein C."/>
            <person name="Kobayashi Y."/>
            <person name="Koetter P."/>
            <person name="Koningstein G."/>
            <person name="Krogh S."/>
            <person name="Kumano M."/>
            <person name="Kurita K."/>
            <person name="Lapidus A."/>
            <person name="Lardinois S."/>
            <person name="Lauber J."/>
            <person name="Lazarevic V."/>
            <person name="Lee S.-M."/>
            <person name="Levine A."/>
            <person name="Liu H."/>
            <person name="Masuda S."/>
            <person name="Mauel C."/>
            <person name="Medigue C."/>
            <person name="Medina N."/>
            <person name="Mellado R.P."/>
            <person name="Mizuno M."/>
            <person name="Moestl D."/>
            <person name="Nakai S."/>
            <person name="Noback M."/>
            <person name="Noone D."/>
            <person name="O'Reilly M."/>
            <person name="Ogawa K."/>
            <person name="Ogiwara A."/>
            <person name="Oudega B."/>
            <person name="Park S.-H."/>
            <person name="Parro V."/>
            <person name="Pohl T.M."/>
            <person name="Portetelle D."/>
            <person name="Porwollik S."/>
            <person name="Prescott A.M."/>
            <person name="Presecan E."/>
            <person name="Pujic P."/>
            <person name="Purnelle B."/>
            <person name="Rapoport G."/>
            <person name="Rey M."/>
            <person name="Reynolds S."/>
            <person name="Rieger M."/>
            <person name="Rivolta C."/>
            <person name="Rocha E."/>
            <person name="Roche B."/>
            <person name="Rose M."/>
            <person name="Sadaie Y."/>
            <person name="Sato T."/>
            <person name="Scanlan E."/>
            <person name="Schleich S."/>
            <person name="Schroeter R."/>
            <person name="Scoffone F."/>
            <person name="Sekiguchi J."/>
            <person name="Sekowska A."/>
            <person name="Seror S.J."/>
            <person name="Serror P."/>
            <person name="Shin B.-S."/>
            <person name="Soldo B."/>
            <person name="Sorokin A."/>
            <person name="Tacconi E."/>
            <person name="Takagi T."/>
            <person name="Takahashi H."/>
            <person name="Takemaru K."/>
            <person name="Takeuchi M."/>
            <person name="Tamakoshi A."/>
            <person name="Tanaka T."/>
            <person name="Terpstra P."/>
            <person name="Tognoni A."/>
            <person name="Tosato V."/>
            <person name="Uchiyama S."/>
            <person name="Vandenbol M."/>
            <person name="Vannier F."/>
            <person name="Vassarotti A."/>
            <person name="Viari A."/>
            <person name="Wambutt R."/>
            <person name="Wedler E."/>
            <person name="Wedler H."/>
            <person name="Weitzenegger T."/>
            <person name="Winters P."/>
            <person name="Wipat A."/>
            <person name="Yamamoto H."/>
            <person name="Yamane K."/>
            <person name="Yasumoto K."/>
            <person name="Yata K."/>
            <person name="Yoshida K."/>
            <person name="Yoshikawa H.-F."/>
            <person name="Zumstein E."/>
            <person name="Yoshikawa H."/>
            <person name="Danchin A."/>
        </authorList>
    </citation>
    <scope>NUCLEOTIDE SEQUENCE [LARGE SCALE GENOMIC DNA]</scope>
    <source>
        <strain>168</strain>
    </source>
</reference>
<reference key="2">
    <citation type="journal article" date="2009" name="Microbiology">
        <title>From a consortium sequence to a unified sequence: the Bacillus subtilis 168 reference genome a decade later.</title>
        <authorList>
            <person name="Barbe V."/>
            <person name="Cruveiller S."/>
            <person name="Kunst F."/>
            <person name="Lenoble P."/>
            <person name="Meurice G."/>
            <person name="Sekowska A."/>
            <person name="Vallenet D."/>
            <person name="Wang T."/>
            <person name="Moszer I."/>
            <person name="Medigue C."/>
            <person name="Danchin A."/>
        </authorList>
    </citation>
    <scope>IDENTIFICATION</scope>
</reference>
<name>YTZL_BACSU</name>
<accession>C0H3Q2</accession>
<gene>
    <name type="primary">ytzL</name>
    <name type="ordered locus">BSU30739</name>
</gene>